<gene>
    <name type="primary">CYCB2-1</name>
    <name type="synonym">CYCOS1</name>
    <name type="ORF">H0211B05.16</name>
    <name type="ORF">H0409D10.3</name>
    <name type="ORF">OsI_016405</name>
</gene>
<keyword id="KW-0131">Cell cycle</keyword>
<keyword id="KW-0132">Cell division</keyword>
<keyword id="KW-0195">Cyclin</keyword>
<keyword id="KW-0498">Mitosis</keyword>
<keyword id="KW-1185">Reference proteome</keyword>
<accession>Q01J96</accession>
<accession>A2XWG2</accession>
<accession>Q40670</accession>
<name>CCB21_ORYSI</name>
<organism>
    <name type="scientific">Oryza sativa subsp. indica</name>
    <name type="common">Rice</name>
    <dbReference type="NCBI Taxonomy" id="39946"/>
    <lineage>
        <taxon>Eukaryota</taxon>
        <taxon>Viridiplantae</taxon>
        <taxon>Streptophyta</taxon>
        <taxon>Embryophyta</taxon>
        <taxon>Tracheophyta</taxon>
        <taxon>Spermatophyta</taxon>
        <taxon>Magnoliopsida</taxon>
        <taxon>Liliopsida</taxon>
        <taxon>Poales</taxon>
        <taxon>Poaceae</taxon>
        <taxon>BOP clade</taxon>
        <taxon>Oryzoideae</taxon>
        <taxon>Oryzeae</taxon>
        <taxon>Oryzinae</taxon>
        <taxon>Oryza</taxon>
        <taxon>Oryza sativa</taxon>
    </lineage>
</organism>
<protein>
    <recommendedName>
        <fullName>Cyclin-B2-1</fullName>
    </recommendedName>
    <alternativeName>
        <fullName>CycOs1</fullName>
    </alternativeName>
    <alternativeName>
        <fullName>G2/mitotic-specific cyclin-B2-1</fullName>
        <shortName>CycB2;1</shortName>
    </alternativeName>
</protein>
<reference key="1">
    <citation type="journal article" date="2002" name="Nature">
        <title>Sequence and analysis of rice chromosome 4.</title>
        <authorList>
            <person name="Feng Q."/>
            <person name="Zhang Y."/>
            <person name="Hao P."/>
            <person name="Wang S."/>
            <person name="Fu G."/>
            <person name="Huang Y."/>
            <person name="Li Y."/>
            <person name="Zhu J."/>
            <person name="Liu Y."/>
            <person name="Hu X."/>
            <person name="Jia P."/>
            <person name="Zhang Y."/>
            <person name="Zhao Q."/>
            <person name="Ying K."/>
            <person name="Yu S."/>
            <person name="Tang Y."/>
            <person name="Weng Q."/>
            <person name="Zhang L."/>
            <person name="Lu Y."/>
            <person name="Mu J."/>
            <person name="Lu Y."/>
            <person name="Zhang L.S."/>
            <person name="Yu Z."/>
            <person name="Fan D."/>
            <person name="Liu X."/>
            <person name="Lu T."/>
            <person name="Li C."/>
            <person name="Wu Y."/>
            <person name="Sun T."/>
            <person name="Lei H."/>
            <person name="Li T."/>
            <person name="Hu H."/>
            <person name="Guan J."/>
            <person name="Wu M."/>
            <person name="Zhang R."/>
            <person name="Zhou B."/>
            <person name="Chen Z."/>
            <person name="Chen L."/>
            <person name="Jin Z."/>
            <person name="Wang R."/>
            <person name="Yin H."/>
            <person name="Cai Z."/>
            <person name="Ren S."/>
            <person name="Lv G."/>
            <person name="Gu W."/>
            <person name="Zhu G."/>
            <person name="Tu Y."/>
            <person name="Jia J."/>
            <person name="Zhang Y."/>
            <person name="Chen J."/>
            <person name="Kang H."/>
            <person name="Chen X."/>
            <person name="Shao C."/>
            <person name="Sun Y."/>
            <person name="Hu Q."/>
            <person name="Zhang X."/>
            <person name="Zhang W."/>
            <person name="Wang L."/>
            <person name="Ding C."/>
            <person name="Sheng H."/>
            <person name="Gu J."/>
            <person name="Chen S."/>
            <person name="Ni L."/>
            <person name="Zhu F."/>
            <person name="Chen W."/>
            <person name="Lan L."/>
            <person name="Lai Y."/>
            <person name="Cheng Z."/>
            <person name="Gu M."/>
            <person name="Jiang J."/>
            <person name="Li J."/>
            <person name="Hong G."/>
            <person name="Xue Y."/>
            <person name="Han B."/>
        </authorList>
    </citation>
    <scope>NUCLEOTIDE SEQUENCE [LARGE SCALE GENOMIC DNA]</scope>
    <source>
        <strain>cv. Guang-Lu-Ai No.4</strain>
    </source>
</reference>
<reference key="2">
    <citation type="journal article" date="2005" name="PLoS Biol.">
        <title>The genomes of Oryza sativa: a history of duplications.</title>
        <authorList>
            <person name="Yu J."/>
            <person name="Wang J."/>
            <person name="Lin W."/>
            <person name="Li S."/>
            <person name="Li H."/>
            <person name="Zhou J."/>
            <person name="Ni P."/>
            <person name="Dong W."/>
            <person name="Hu S."/>
            <person name="Zeng C."/>
            <person name="Zhang J."/>
            <person name="Zhang Y."/>
            <person name="Li R."/>
            <person name="Xu Z."/>
            <person name="Li S."/>
            <person name="Li X."/>
            <person name="Zheng H."/>
            <person name="Cong L."/>
            <person name="Lin L."/>
            <person name="Yin J."/>
            <person name="Geng J."/>
            <person name="Li G."/>
            <person name="Shi J."/>
            <person name="Liu J."/>
            <person name="Lv H."/>
            <person name="Li J."/>
            <person name="Wang J."/>
            <person name="Deng Y."/>
            <person name="Ran L."/>
            <person name="Shi X."/>
            <person name="Wang X."/>
            <person name="Wu Q."/>
            <person name="Li C."/>
            <person name="Ren X."/>
            <person name="Wang J."/>
            <person name="Wang X."/>
            <person name="Li D."/>
            <person name="Liu D."/>
            <person name="Zhang X."/>
            <person name="Ji Z."/>
            <person name="Zhao W."/>
            <person name="Sun Y."/>
            <person name="Zhang Z."/>
            <person name="Bao J."/>
            <person name="Han Y."/>
            <person name="Dong L."/>
            <person name="Ji J."/>
            <person name="Chen P."/>
            <person name="Wu S."/>
            <person name="Liu J."/>
            <person name="Xiao Y."/>
            <person name="Bu D."/>
            <person name="Tan J."/>
            <person name="Yang L."/>
            <person name="Ye C."/>
            <person name="Zhang J."/>
            <person name="Xu J."/>
            <person name="Zhou Y."/>
            <person name="Yu Y."/>
            <person name="Zhang B."/>
            <person name="Zhuang S."/>
            <person name="Wei H."/>
            <person name="Liu B."/>
            <person name="Lei M."/>
            <person name="Yu H."/>
            <person name="Li Y."/>
            <person name="Xu H."/>
            <person name="Wei S."/>
            <person name="He X."/>
            <person name="Fang L."/>
            <person name="Zhang Z."/>
            <person name="Zhang Y."/>
            <person name="Huang X."/>
            <person name="Su Z."/>
            <person name="Tong W."/>
            <person name="Li J."/>
            <person name="Tong Z."/>
            <person name="Li S."/>
            <person name="Ye J."/>
            <person name="Wang L."/>
            <person name="Fang L."/>
            <person name="Lei T."/>
            <person name="Chen C.-S."/>
            <person name="Chen H.-C."/>
            <person name="Xu Z."/>
            <person name="Li H."/>
            <person name="Huang H."/>
            <person name="Zhang F."/>
            <person name="Xu H."/>
            <person name="Li N."/>
            <person name="Zhao C."/>
            <person name="Li S."/>
            <person name="Dong L."/>
            <person name="Huang Y."/>
            <person name="Li L."/>
            <person name="Xi Y."/>
            <person name="Qi Q."/>
            <person name="Li W."/>
            <person name="Zhang B."/>
            <person name="Hu W."/>
            <person name="Zhang Y."/>
            <person name="Tian X."/>
            <person name="Jiao Y."/>
            <person name="Liang X."/>
            <person name="Jin J."/>
            <person name="Gao L."/>
            <person name="Zheng W."/>
            <person name="Hao B."/>
            <person name="Liu S.-M."/>
            <person name="Wang W."/>
            <person name="Yuan L."/>
            <person name="Cao M."/>
            <person name="McDermott J."/>
            <person name="Samudrala R."/>
            <person name="Wang J."/>
            <person name="Wong G.K.-S."/>
            <person name="Yang H."/>
        </authorList>
    </citation>
    <scope>NUCLEOTIDE SEQUENCE [LARGE SCALE GENOMIC DNA]</scope>
    <source>
        <strain>cv. 93-11</strain>
    </source>
</reference>
<reference key="3">
    <citation type="journal article" date="1995" name="Plant J.">
        <title>Gibberellin promotes histone H1 kinase activity and the expression of cdc2 and cyclin genes during the induction of rapid growth in deepwater rice internodes.</title>
        <authorList>
            <person name="Sauter M."/>
            <person name="Mekhedov S.L."/>
            <person name="Kende H."/>
        </authorList>
    </citation>
    <scope>NUCLEOTIDE SEQUENCE [MRNA] OF 179-423</scope>
    <scope>TISSUE SPECIFICITY</scope>
    <scope>INDUCTION</scope>
    <scope>VARIANT 418-HIS--CYS-423 DELINS GLN-PRO-CYS</scope>
    <source>
        <strain>cv. Pin Gaew 53</strain>
        <tissue>Internode</tissue>
    </source>
</reference>
<reference key="4">
    <citation type="journal article" date="1997" name="Plant J.">
        <title>Differential expression of a CAK (cdc2-activating kinase)-like protein kinase, cyclins and cdc2 genes from rice during the cell cycle and in response to gibberellin.</title>
        <authorList>
            <person name="Sauter M."/>
        </authorList>
    </citation>
    <scope>TISSUE SPECIFICITY</scope>
    <scope>DEVELOPMENTAL STAGE</scope>
    <scope>INDUCTION</scope>
</reference>
<reference key="5">
    <citation type="journal article" date="1999" name="Plant Physiol.">
        <title>Adventitious root growth and cell-cycle induction in deepwater rice.</title>
        <authorList>
            <person name="Lorbiecke R."/>
            <person name="Sauter M."/>
        </authorList>
    </citation>
    <scope>TISSUE SPECIFICITY</scope>
    <scope>INDUCTION</scope>
</reference>
<reference key="6">
    <citation type="journal article" date="2000" name="Planta">
        <title>The cell cycle genes cycA1;1 and cdc2Os-3 are coordinately regulated by gibberellin in planta.</title>
        <authorList>
            <person name="Fabian T."/>
            <person name="Lorbiecke R."/>
            <person name="Umeda M."/>
            <person name="Sauter M."/>
        </authorList>
    </citation>
    <scope>DEVELOPMENTAL STAGE</scope>
    <scope>INDUCTION</scope>
</reference>
<reference key="7">
    <citation type="journal article" date="2003" name="Plant J.">
        <title>Cell cycle function of a rice B2-type cyclin interacting with a B-type cyclin-dependent kinase.</title>
        <authorList>
            <person name="Lee J."/>
            <person name="Das A."/>
            <person name="Yamaguchi M."/>
            <person name="Hashimoto J."/>
            <person name="Tsutsumi N."/>
            <person name="Uchimiya H."/>
            <person name="Umeda M."/>
        </authorList>
    </citation>
    <scope>FUNCTION</scope>
    <scope>DEVELOPMENTAL STAGE</scope>
    <scope>INTERACTION WITH CDKB2-1</scope>
</reference>
<sequence>MDRASENRRLAAVGKPVPGIGEMGNRRPLRDINNLVGAPPHPSAIAKKPMLEKSGKEEQKPALVVSHRPMTRNFAASLTRKEQLDHQVSVADAAVVCTDPQKNPIPDGTVDDDVESCESNDYIAVDECNDTDEDESMMDIDSADSGNPLAATEYVEELYKFYRENEEMSCVQPDYMSSQGDINEKMRAILIDWLIEVHHKFELMDETLFLTVNIVDRFLEKQVVPRKKLQLVGVTAMLLACKYEEVAVPVVEDLVLISDRAYTKGQILEMEKLILNTLQFNMSVPTPYVFMRRFLKAAQSDKQLQLLSFFILELSLVEYQMLKYRPSLLAAAAVYTAQCALTRCQQWTKTCELHSRYTGEQLLECSRMMVDFHQKAGAGKLTGVHRKYSTFKFGCAAKTEPALFLLESGAGGYNLQKHLQQAC</sequence>
<proteinExistence type="evidence at protein level"/>
<dbReference type="EMBL" id="CR855177">
    <property type="protein sequence ID" value="CAH67179.1"/>
    <property type="molecule type" value="Genomic_DNA"/>
</dbReference>
<dbReference type="EMBL" id="CR855140">
    <property type="protein sequence ID" value="CAH66745.1"/>
    <property type="molecule type" value="Genomic_DNA"/>
</dbReference>
<dbReference type="EMBL" id="CM000129">
    <property type="status" value="NOT_ANNOTATED_CDS"/>
    <property type="molecule type" value="Genomic_DNA"/>
</dbReference>
<dbReference type="EMBL" id="X82035">
    <property type="protein sequence ID" value="CAA57555.1"/>
    <property type="molecule type" value="mRNA"/>
</dbReference>
<dbReference type="PIR" id="S49462">
    <property type="entry name" value="S49462"/>
</dbReference>
<dbReference type="SMR" id="Q01J96"/>
<dbReference type="STRING" id="39946.Q01J96"/>
<dbReference type="EnsemblPlants" id="BGIOSGA014544-TA">
    <property type="protein sequence ID" value="BGIOSGA014544-PA"/>
    <property type="gene ID" value="BGIOSGA014544"/>
</dbReference>
<dbReference type="Gramene" id="BGIOSGA014544-TA">
    <property type="protein sequence ID" value="BGIOSGA014544-PA"/>
    <property type="gene ID" value="BGIOSGA014544"/>
</dbReference>
<dbReference type="HOGENOM" id="CLU_020695_0_0_1"/>
<dbReference type="OMA" id="NLQKQPC"/>
<dbReference type="Proteomes" id="UP000007015">
    <property type="component" value="Chromosome 4"/>
</dbReference>
<dbReference type="ExpressionAtlas" id="Q01J96">
    <property type="expression patterns" value="differential"/>
</dbReference>
<dbReference type="GO" id="GO:0016538">
    <property type="term" value="F:cyclin-dependent protein serine/threonine kinase regulator activity"/>
    <property type="evidence" value="ECO:0007669"/>
    <property type="project" value="InterPro"/>
</dbReference>
<dbReference type="GO" id="GO:0051301">
    <property type="term" value="P:cell division"/>
    <property type="evidence" value="ECO:0007669"/>
    <property type="project" value="UniProtKB-KW"/>
</dbReference>
<dbReference type="GO" id="GO:0044772">
    <property type="term" value="P:mitotic cell cycle phase transition"/>
    <property type="evidence" value="ECO:0007669"/>
    <property type="project" value="InterPro"/>
</dbReference>
<dbReference type="CDD" id="cd20567">
    <property type="entry name" value="CYCLIN_AtCycB-like_rpt1"/>
    <property type="match status" value="1"/>
</dbReference>
<dbReference type="CDD" id="cd20511">
    <property type="entry name" value="CYCLIN_AtCycB-like_rpt2"/>
    <property type="match status" value="1"/>
</dbReference>
<dbReference type="FunFam" id="1.10.472.10:FF:000032">
    <property type="entry name" value="G2/mitotic-specific cyclin-1"/>
    <property type="match status" value="1"/>
</dbReference>
<dbReference type="Gene3D" id="1.10.472.10">
    <property type="entry name" value="Cyclin-like"/>
    <property type="match status" value="2"/>
</dbReference>
<dbReference type="InterPro" id="IPR039361">
    <property type="entry name" value="Cyclin"/>
</dbReference>
<dbReference type="InterPro" id="IPR013763">
    <property type="entry name" value="Cyclin-like_dom"/>
</dbReference>
<dbReference type="InterPro" id="IPR036915">
    <property type="entry name" value="Cyclin-like_sf"/>
</dbReference>
<dbReference type="InterPro" id="IPR046965">
    <property type="entry name" value="Cyclin_A/B-like"/>
</dbReference>
<dbReference type="InterPro" id="IPR004367">
    <property type="entry name" value="Cyclin_C-dom"/>
</dbReference>
<dbReference type="InterPro" id="IPR006671">
    <property type="entry name" value="Cyclin_N"/>
</dbReference>
<dbReference type="InterPro" id="IPR048258">
    <property type="entry name" value="Cyclins_cyclin-box"/>
</dbReference>
<dbReference type="PANTHER" id="PTHR10177">
    <property type="entry name" value="CYCLINS"/>
    <property type="match status" value="1"/>
</dbReference>
<dbReference type="Pfam" id="PF02984">
    <property type="entry name" value="Cyclin_C"/>
    <property type="match status" value="1"/>
</dbReference>
<dbReference type="Pfam" id="PF00134">
    <property type="entry name" value="Cyclin_N"/>
    <property type="match status" value="1"/>
</dbReference>
<dbReference type="PIRSF" id="PIRSF001771">
    <property type="entry name" value="Cyclin_A_B_D_E"/>
    <property type="match status" value="1"/>
</dbReference>
<dbReference type="SMART" id="SM00385">
    <property type="entry name" value="CYCLIN"/>
    <property type="match status" value="2"/>
</dbReference>
<dbReference type="SMART" id="SM01332">
    <property type="entry name" value="Cyclin_C"/>
    <property type="match status" value="1"/>
</dbReference>
<dbReference type="SUPFAM" id="SSF47954">
    <property type="entry name" value="Cyclin-like"/>
    <property type="match status" value="2"/>
</dbReference>
<dbReference type="PROSITE" id="PS00292">
    <property type="entry name" value="CYCLINS"/>
    <property type="match status" value="1"/>
</dbReference>
<feature type="chain" id="PRO_0000287385" description="Cyclin-B2-1">
    <location>
        <begin position="1"/>
        <end position="423"/>
    </location>
</feature>
<feature type="region of interest" description="Disordered" evidence="1">
    <location>
        <begin position="1"/>
        <end position="61"/>
    </location>
</feature>
<feature type="compositionally biased region" description="Basic and acidic residues" evidence="1">
    <location>
        <begin position="49"/>
        <end position="60"/>
    </location>
</feature>
<feature type="sequence variant" description="In strain: cv. Pin Gaew 53." evidence="4">
    <original>HLQQAC</original>
    <variation>QPC</variation>
    <location>
        <begin position="418"/>
        <end position="423"/>
    </location>
</feature>
<feature type="sequence conflict" description="In Ref. 3; CAA57555." evidence="7" ref="3">
    <original>A</original>
    <variation>S</variation>
    <location>
        <position position="330"/>
    </location>
</feature>
<feature type="sequence conflict" description="In Ref. 3; CAA57555." evidence="7" ref="3">
    <original>Q</original>
    <variation>K</variation>
    <location>
        <position position="416"/>
    </location>
</feature>
<evidence type="ECO:0000256" key="1">
    <source>
        <dbReference type="SAM" id="MobiDB-lite"/>
    </source>
</evidence>
<evidence type="ECO:0000269" key="2">
    <source>
    </source>
</evidence>
<evidence type="ECO:0000269" key="3">
    <source>
    </source>
</evidence>
<evidence type="ECO:0000269" key="4">
    <source>
    </source>
</evidence>
<evidence type="ECO:0000269" key="5">
    <source>
    </source>
</evidence>
<evidence type="ECO:0000269" key="6">
    <source>
    </source>
</evidence>
<evidence type="ECO:0000305" key="7"/>
<comment type="function">
    <text evidence="3">Involved in the control of the cell cycle at the G2/M (mitosis) transition. May activate CDKB2-1 kinase.</text>
</comment>
<comment type="subunit">
    <text evidence="3">Interacts with CDKB2-1.</text>
</comment>
<comment type="tissue specificity">
    <text evidence="4 5 6">Expressed in the intercalary meristem and the elongation zone of internodes. Expressed in adventitious roots at all nodes under submergence conditions.</text>
</comment>
<comment type="developmental stage">
    <text evidence="2 3 5">Expressed in the G2/M phases and disappears at the anaphase of mitosis.</text>
</comment>
<comment type="induction">
    <text evidence="2 4 5 6">By gibberellic acid (GA3), ethylene and submergence.</text>
</comment>
<comment type="miscellaneous">
    <text>May be involved in rapid internodal growth of deepwater rice under submergence.</text>
</comment>
<comment type="similarity">
    <text evidence="7">Belongs to the cyclin family. Cyclin AB subfamily.</text>
</comment>